<proteinExistence type="inferred from homology"/>
<reference key="1">
    <citation type="journal article" date="2007" name="Proc. Natl. Acad. Sci. U.S.A.">
        <title>Genome sequencing and comparative analysis of Saccharomyces cerevisiae strain YJM789.</title>
        <authorList>
            <person name="Wei W."/>
            <person name="McCusker J.H."/>
            <person name="Hyman R.W."/>
            <person name="Jones T."/>
            <person name="Ning Y."/>
            <person name="Cao Z."/>
            <person name="Gu Z."/>
            <person name="Bruno D."/>
            <person name="Miranda M."/>
            <person name="Nguyen M."/>
            <person name="Wilhelmy J."/>
            <person name="Komp C."/>
            <person name="Tamse R."/>
            <person name="Wang X."/>
            <person name="Jia P."/>
            <person name="Luedi P."/>
            <person name="Oefner P.J."/>
            <person name="David L."/>
            <person name="Dietrich F.S."/>
            <person name="Li Y."/>
            <person name="Davis R.W."/>
            <person name="Steinmetz L.M."/>
        </authorList>
    </citation>
    <scope>NUCLEOTIDE SEQUENCE [LARGE SCALE GENOMIC DNA]</scope>
    <source>
        <strain>YJM789</strain>
    </source>
</reference>
<dbReference type="EMBL" id="AAFW02000020">
    <property type="protein sequence ID" value="EDN64362.1"/>
    <property type="molecule type" value="Genomic_DNA"/>
</dbReference>
<dbReference type="SMR" id="A6ZM32"/>
<dbReference type="HOGENOM" id="CLU_087356_1_0_1"/>
<dbReference type="Proteomes" id="UP000007060">
    <property type="component" value="Unassembled WGS sequence"/>
</dbReference>
<dbReference type="GO" id="GO:0031966">
    <property type="term" value="C:mitochondrial membrane"/>
    <property type="evidence" value="ECO:0007669"/>
    <property type="project" value="UniProtKB-SubCell"/>
</dbReference>
<dbReference type="GO" id="GO:0097250">
    <property type="term" value="P:mitochondrial respirasome assembly"/>
    <property type="evidence" value="ECO:0007669"/>
    <property type="project" value="TreeGrafter"/>
</dbReference>
<dbReference type="Gene3D" id="6.10.140.1320">
    <property type="match status" value="1"/>
</dbReference>
<dbReference type="InterPro" id="IPR007667">
    <property type="entry name" value="Hypoxia_induced_domain"/>
</dbReference>
<dbReference type="InterPro" id="IPR050355">
    <property type="entry name" value="RCF1"/>
</dbReference>
<dbReference type="PANTHER" id="PTHR12297:SF3">
    <property type="entry name" value="HIG1 DOMAIN FAMILY MEMBER 1A"/>
    <property type="match status" value="1"/>
</dbReference>
<dbReference type="PANTHER" id="PTHR12297">
    <property type="entry name" value="HYPOXIA-INDUCBILE GENE 1 HIG1 -RELATED"/>
    <property type="match status" value="1"/>
</dbReference>
<dbReference type="Pfam" id="PF04588">
    <property type="entry name" value="HIG_1_N"/>
    <property type="match status" value="1"/>
</dbReference>
<dbReference type="PROSITE" id="PS51503">
    <property type="entry name" value="HIG1"/>
    <property type="match status" value="1"/>
</dbReference>
<name>RCF1_YEAS7</name>
<feature type="chain" id="PRO_0000399657" description="Respiratory supercomplex factor 1, mitochondrial">
    <location>
        <begin position="1"/>
        <end position="159"/>
    </location>
</feature>
<feature type="transmembrane region" description="Helical" evidence="3">
    <location>
        <begin position="32"/>
        <end position="52"/>
    </location>
</feature>
<feature type="transmembrane region" description="Helical" evidence="3">
    <location>
        <begin position="68"/>
        <end position="88"/>
    </location>
</feature>
<feature type="domain" description="HIG1" evidence="3">
    <location>
        <begin position="5"/>
        <end position="96"/>
    </location>
</feature>
<feature type="coiled-coil region" evidence="2">
    <location>
        <begin position="88"/>
        <end position="159"/>
    </location>
</feature>
<gene>
    <name type="primary">RCF1</name>
    <name type="synonym">AIM31</name>
    <name type="ORF">SCY_4144</name>
</gene>
<sequence length="159" mass="18477">MSRMPSSFDVTERDLDDMTFGERIIYHCKKQPLVPIGCLLTTGAVILAAQNVRLGNKWKAQYYFRWRVGLQAATLVALVAGSFIYGTSGKELKAKEEQLKEKAKMREKLWIQELERREEETEARRKRAELARMKTLENEEEIKNLEKELSDLENKLGKK</sequence>
<evidence type="ECO:0000250" key="1"/>
<evidence type="ECO:0000255" key="2"/>
<evidence type="ECO:0000255" key="3">
    <source>
        <dbReference type="PROSITE-ProRule" id="PRU00836"/>
    </source>
</evidence>
<evidence type="ECO:0000305" key="4"/>
<organism>
    <name type="scientific">Saccharomyces cerevisiae (strain YJM789)</name>
    <name type="common">Baker's yeast</name>
    <dbReference type="NCBI Taxonomy" id="307796"/>
    <lineage>
        <taxon>Eukaryota</taxon>
        <taxon>Fungi</taxon>
        <taxon>Dikarya</taxon>
        <taxon>Ascomycota</taxon>
        <taxon>Saccharomycotina</taxon>
        <taxon>Saccharomycetes</taxon>
        <taxon>Saccharomycetales</taxon>
        <taxon>Saccharomycetaceae</taxon>
        <taxon>Saccharomyces</taxon>
    </lineage>
</organism>
<comment type="function">
    <text evidence="1">Cytochrome c oxidase subunit required for growth under hypoxic conditions. Involved in the assembly of the Complex III-Complex IV supercomplex, as well as in the recruitment of COX13 and RCF2 into cytochrome c oxidase. May also be required for late-stage assembly of the COX12 and COX13 subunits and for cytochrome c oxidase activity (By similarity).</text>
</comment>
<comment type="subunit">
    <text evidence="1">Associates with the respiratory chain complex III/complex IV supercomplex. Interacts with COX3.</text>
</comment>
<comment type="subcellular location">
    <subcellularLocation>
        <location evidence="3">Mitochondrion membrane</location>
        <topology evidence="3">Multi-pass membrane protein</topology>
    </subcellularLocation>
</comment>
<comment type="similarity">
    <text evidence="4">Belongs to the RCF1 family.</text>
</comment>
<keyword id="KW-0175">Coiled coil</keyword>
<keyword id="KW-0472">Membrane</keyword>
<keyword id="KW-0496">Mitochondrion</keyword>
<keyword id="KW-0812">Transmembrane</keyword>
<keyword id="KW-1133">Transmembrane helix</keyword>
<protein>
    <recommendedName>
        <fullName>Respiratory supercomplex factor 1, mitochondrial</fullName>
    </recommendedName>
    <alternativeName>
        <fullName>Altered inheritance of mitochondria protein 31</fullName>
    </alternativeName>
</protein>
<accession>A6ZM32</accession>